<feature type="chain" id="PRO_0000103432" description="Dihydroxy-acid dehydratase">
    <location>
        <begin position="1"/>
        <end position="600"/>
    </location>
</feature>
<feature type="active site" description="Proton acceptor" evidence="1">
    <location>
        <position position="515"/>
    </location>
</feature>
<feature type="binding site" evidence="1">
    <location>
        <position position="82"/>
    </location>
    <ligand>
        <name>Mg(2+)</name>
        <dbReference type="ChEBI" id="CHEBI:18420"/>
    </ligand>
</feature>
<feature type="binding site" evidence="1">
    <location>
        <position position="123"/>
    </location>
    <ligand>
        <name>[2Fe-2S] cluster</name>
        <dbReference type="ChEBI" id="CHEBI:190135"/>
    </ligand>
</feature>
<feature type="binding site" evidence="1">
    <location>
        <position position="124"/>
    </location>
    <ligand>
        <name>Mg(2+)</name>
        <dbReference type="ChEBI" id="CHEBI:18420"/>
    </ligand>
</feature>
<feature type="binding site" description="via carbamate group" evidence="1">
    <location>
        <position position="125"/>
    </location>
    <ligand>
        <name>Mg(2+)</name>
        <dbReference type="ChEBI" id="CHEBI:18420"/>
    </ligand>
</feature>
<feature type="binding site" evidence="1">
    <location>
        <position position="192"/>
    </location>
    <ligand>
        <name>[2Fe-2S] cluster</name>
        <dbReference type="ChEBI" id="CHEBI:190135"/>
    </ligand>
</feature>
<feature type="binding site" evidence="1">
    <location>
        <position position="489"/>
    </location>
    <ligand>
        <name>Mg(2+)</name>
        <dbReference type="ChEBI" id="CHEBI:18420"/>
    </ligand>
</feature>
<feature type="modified residue" description="N6-carboxylysine" evidence="1">
    <location>
        <position position="125"/>
    </location>
</feature>
<proteinExistence type="inferred from homology"/>
<evidence type="ECO:0000255" key="1">
    <source>
        <dbReference type="HAMAP-Rule" id="MF_00012"/>
    </source>
</evidence>
<gene>
    <name evidence="1" type="primary">ilvD</name>
    <name type="ordered locus">BT_2078</name>
</gene>
<sequence>MKKQLRSSFSTQGRRMAGARALWAANGMKKNQMGKPIIAIVNSFTQFVPGHVHLHEIGQLVKAEIEKLGCFAAEFNTIAIDDGIAMGHDGMLYSLPSRDIIADSVEYMVNAHKADAMVCISNCDKITPGMLMAAMRLNIPTVFVSGGPMEAGEWNGQHLDLIDAMIKSADDSVSDQEVANIEQNACPTCGCCSGMFTANSMNCLNEAIGLALPGNGTIVATHENRTKLFEDAAKLIVENAMKYYEEGDESVLPRSIATRQAFLNAMTLDIAMGGSTNTVLHLLAVAHEAGVDFKMDDIDMLSRKTPCLCKVAPNTQKYHIQDVNRAGGIIAILAELAKGGLIDTSVLRVDGMSLAEAIDQYSITSPNVTEKAMSKYSSAAGNRFNLVLGSQGAYYQELDKDRANGCIRDLEHAYSKDGGLAVLKGNIAQDGCVVKTAGVDESIWKFTGPAKVFDSQEAACEGILGGRVVSGDVVVITHEGPKGGPGMQEMLYPTSYIKSRHLGKECALITDGRFSGGTSGLSIGHVSPEAAAGGNIGKIVDGDIIEIDIPARTINVRLTDEELAARPMTPVTRDRYVPKSLKAYASMVSSADKGAVRLID</sequence>
<keyword id="KW-0001">2Fe-2S</keyword>
<keyword id="KW-0028">Amino-acid biosynthesis</keyword>
<keyword id="KW-0100">Branched-chain amino acid biosynthesis</keyword>
<keyword id="KW-0408">Iron</keyword>
<keyword id="KW-0411">Iron-sulfur</keyword>
<keyword id="KW-0456">Lyase</keyword>
<keyword id="KW-0460">Magnesium</keyword>
<keyword id="KW-0479">Metal-binding</keyword>
<keyword id="KW-1185">Reference proteome</keyword>
<dbReference type="EC" id="4.2.1.9" evidence="1"/>
<dbReference type="EMBL" id="AE015928">
    <property type="protein sequence ID" value="AAO77185.1"/>
    <property type="molecule type" value="Genomic_DNA"/>
</dbReference>
<dbReference type="RefSeq" id="NP_810991.1">
    <property type="nucleotide sequence ID" value="NC_004663.1"/>
</dbReference>
<dbReference type="RefSeq" id="WP_008761033.1">
    <property type="nucleotide sequence ID" value="NZ_UYXG01000005.1"/>
</dbReference>
<dbReference type="SMR" id="Q8A608"/>
<dbReference type="FunCoup" id="Q8A608">
    <property type="interactions" value="473"/>
</dbReference>
<dbReference type="STRING" id="226186.BT_2078"/>
<dbReference type="PaxDb" id="226186-BT_2078"/>
<dbReference type="EnsemblBacteria" id="AAO77185">
    <property type="protein sequence ID" value="AAO77185"/>
    <property type="gene ID" value="BT_2078"/>
</dbReference>
<dbReference type="GeneID" id="60928067"/>
<dbReference type="KEGG" id="bth:BT_2078"/>
<dbReference type="PATRIC" id="fig|226186.12.peg.2139"/>
<dbReference type="eggNOG" id="COG0129">
    <property type="taxonomic scope" value="Bacteria"/>
</dbReference>
<dbReference type="HOGENOM" id="CLU_014271_4_2_10"/>
<dbReference type="InParanoid" id="Q8A608"/>
<dbReference type="OrthoDB" id="9807077at2"/>
<dbReference type="UniPathway" id="UPA00047">
    <property type="reaction ID" value="UER00057"/>
</dbReference>
<dbReference type="UniPathway" id="UPA00049">
    <property type="reaction ID" value="UER00061"/>
</dbReference>
<dbReference type="Proteomes" id="UP000001414">
    <property type="component" value="Chromosome"/>
</dbReference>
<dbReference type="GO" id="GO:0005829">
    <property type="term" value="C:cytosol"/>
    <property type="evidence" value="ECO:0000318"/>
    <property type="project" value="GO_Central"/>
</dbReference>
<dbReference type="GO" id="GO:0051537">
    <property type="term" value="F:2 iron, 2 sulfur cluster binding"/>
    <property type="evidence" value="ECO:0007669"/>
    <property type="project" value="UniProtKB-UniRule"/>
</dbReference>
<dbReference type="GO" id="GO:0004160">
    <property type="term" value="F:dihydroxy-acid dehydratase activity"/>
    <property type="evidence" value="ECO:0007669"/>
    <property type="project" value="UniProtKB-UniRule"/>
</dbReference>
<dbReference type="GO" id="GO:0016836">
    <property type="term" value="F:hydro-lyase activity"/>
    <property type="evidence" value="ECO:0000318"/>
    <property type="project" value="GO_Central"/>
</dbReference>
<dbReference type="GO" id="GO:0000287">
    <property type="term" value="F:magnesium ion binding"/>
    <property type="evidence" value="ECO:0007669"/>
    <property type="project" value="UniProtKB-UniRule"/>
</dbReference>
<dbReference type="GO" id="GO:0009097">
    <property type="term" value="P:isoleucine biosynthetic process"/>
    <property type="evidence" value="ECO:0007669"/>
    <property type="project" value="UniProtKB-UniRule"/>
</dbReference>
<dbReference type="GO" id="GO:0009099">
    <property type="term" value="P:L-valine biosynthetic process"/>
    <property type="evidence" value="ECO:0007669"/>
    <property type="project" value="UniProtKB-UniRule"/>
</dbReference>
<dbReference type="FunFam" id="3.50.30.80:FF:000001">
    <property type="entry name" value="Dihydroxy-acid dehydratase"/>
    <property type="match status" value="1"/>
</dbReference>
<dbReference type="Gene3D" id="3.50.30.80">
    <property type="entry name" value="IlvD/EDD C-terminal domain-like"/>
    <property type="match status" value="1"/>
</dbReference>
<dbReference type="HAMAP" id="MF_00012">
    <property type="entry name" value="IlvD"/>
    <property type="match status" value="1"/>
</dbReference>
<dbReference type="InterPro" id="IPR042096">
    <property type="entry name" value="Dihydro-acid_dehy_C"/>
</dbReference>
<dbReference type="InterPro" id="IPR004404">
    <property type="entry name" value="DihydroxyA_deHydtase"/>
</dbReference>
<dbReference type="InterPro" id="IPR020558">
    <property type="entry name" value="DiOHA_6PGluconate_deHydtase_CS"/>
</dbReference>
<dbReference type="InterPro" id="IPR056740">
    <property type="entry name" value="ILV_EDD_C"/>
</dbReference>
<dbReference type="InterPro" id="IPR000581">
    <property type="entry name" value="ILV_EDD_N"/>
</dbReference>
<dbReference type="InterPro" id="IPR037237">
    <property type="entry name" value="IlvD/EDD_N"/>
</dbReference>
<dbReference type="NCBIfam" id="TIGR00110">
    <property type="entry name" value="ilvD"/>
    <property type="match status" value="1"/>
</dbReference>
<dbReference type="NCBIfam" id="NF009103">
    <property type="entry name" value="PRK12448.1"/>
    <property type="match status" value="1"/>
</dbReference>
<dbReference type="PANTHER" id="PTHR43661">
    <property type="entry name" value="D-XYLONATE DEHYDRATASE"/>
    <property type="match status" value="1"/>
</dbReference>
<dbReference type="PANTHER" id="PTHR43661:SF3">
    <property type="entry name" value="D-XYLONATE DEHYDRATASE YAGF-RELATED"/>
    <property type="match status" value="1"/>
</dbReference>
<dbReference type="Pfam" id="PF24877">
    <property type="entry name" value="ILV_EDD_C"/>
    <property type="match status" value="1"/>
</dbReference>
<dbReference type="Pfam" id="PF00920">
    <property type="entry name" value="ILVD_EDD_N"/>
    <property type="match status" value="1"/>
</dbReference>
<dbReference type="SUPFAM" id="SSF143975">
    <property type="entry name" value="IlvD/EDD N-terminal domain-like"/>
    <property type="match status" value="1"/>
</dbReference>
<dbReference type="SUPFAM" id="SSF52016">
    <property type="entry name" value="LeuD/IlvD-like"/>
    <property type="match status" value="1"/>
</dbReference>
<dbReference type="PROSITE" id="PS00886">
    <property type="entry name" value="ILVD_EDD_1"/>
    <property type="match status" value="1"/>
</dbReference>
<dbReference type="PROSITE" id="PS00887">
    <property type="entry name" value="ILVD_EDD_2"/>
    <property type="match status" value="1"/>
</dbReference>
<accession>Q8A608</accession>
<organism>
    <name type="scientific">Bacteroides thetaiotaomicron (strain ATCC 29148 / DSM 2079 / JCM 5827 / CCUG 10774 / NCTC 10582 / VPI-5482 / E50)</name>
    <dbReference type="NCBI Taxonomy" id="226186"/>
    <lineage>
        <taxon>Bacteria</taxon>
        <taxon>Pseudomonadati</taxon>
        <taxon>Bacteroidota</taxon>
        <taxon>Bacteroidia</taxon>
        <taxon>Bacteroidales</taxon>
        <taxon>Bacteroidaceae</taxon>
        <taxon>Bacteroides</taxon>
    </lineage>
</organism>
<reference key="1">
    <citation type="journal article" date="2003" name="Science">
        <title>A genomic view of the human-Bacteroides thetaiotaomicron symbiosis.</title>
        <authorList>
            <person name="Xu J."/>
            <person name="Bjursell M.K."/>
            <person name="Himrod J."/>
            <person name="Deng S."/>
            <person name="Carmichael L.K."/>
            <person name="Chiang H.C."/>
            <person name="Hooper L.V."/>
            <person name="Gordon J.I."/>
        </authorList>
    </citation>
    <scope>NUCLEOTIDE SEQUENCE [LARGE SCALE GENOMIC DNA]</scope>
    <source>
        <strain>ATCC 29148 / DSM 2079 / JCM 5827 / CCUG 10774 / NCTC 10582 / VPI-5482 / E50</strain>
    </source>
</reference>
<protein>
    <recommendedName>
        <fullName evidence="1">Dihydroxy-acid dehydratase</fullName>
        <shortName evidence="1">DAD</shortName>
        <ecNumber evidence="1">4.2.1.9</ecNumber>
    </recommendedName>
</protein>
<comment type="function">
    <text evidence="1">Functions in the biosynthesis of branched-chain amino acids. Catalyzes the dehydration of (2R,3R)-2,3-dihydroxy-3-methylpentanoate (2,3-dihydroxy-3-methylvalerate) into 2-oxo-3-methylpentanoate (2-oxo-3-methylvalerate) and of (2R)-2,3-dihydroxy-3-methylbutanoate (2,3-dihydroxyisovalerate) into 2-oxo-3-methylbutanoate (2-oxoisovalerate), the penultimate precursor to L-isoleucine and L-valine, respectively.</text>
</comment>
<comment type="catalytic activity">
    <reaction evidence="1">
        <text>(2R)-2,3-dihydroxy-3-methylbutanoate = 3-methyl-2-oxobutanoate + H2O</text>
        <dbReference type="Rhea" id="RHEA:24809"/>
        <dbReference type="ChEBI" id="CHEBI:11851"/>
        <dbReference type="ChEBI" id="CHEBI:15377"/>
        <dbReference type="ChEBI" id="CHEBI:49072"/>
        <dbReference type="EC" id="4.2.1.9"/>
    </reaction>
    <physiologicalReaction direction="left-to-right" evidence="1">
        <dbReference type="Rhea" id="RHEA:24810"/>
    </physiologicalReaction>
</comment>
<comment type="catalytic activity">
    <reaction evidence="1">
        <text>(2R,3R)-2,3-dihydroxy-3-methylpentanoate = (S)-3-methyl-2-oxopentanoate + H2O</text>
        <dbReference type="Rhea" id="RHEA:27694"/>
        <dbReference type="ChEBI" id="CHEBI:15377"/>
        <dbReference type="ChEBI" id="CHEBI:35146"/>
        <dbReference type="ChEBI" id="CHEBI:49258"/>
        <dbReference type="EC" id="4.2.1.9"/>
    </reaction>
    <physiologicalReaction direction="left-to-right" evidence="1">
        <dbReference type="Rhea" id="RHEA:27695"/>
    </physiologicalReaction>
</comment>
<comment type="cofactor">
    <cofactor evidence="1">
        <name>[2Fe-2S] cluster</name>
        <dbReference type="ChEBI" id="CHEBI:190135"/>
    </cofactor>
    <text evidence="1">Binds 1 [2Fe-2S] cluster per subunit. This cluster acts as a Lewis acid cofactor.</text>
</comment>
<comment type="cofactor">
    <cofactor evidence="1">
        <name>Mg(2+)</name>
        <dbReference type="ChEBI" id="CHEBI:18420"/>
    </cofactor>
</comment>
<comment type="pathway">
    <text evidence="1">Amino-acid biosynthesis; L-isoleucine biosynthesis; L-isoleucine from 2-oxobutanoate: step 3/4.</text>
</comment>
<comment type="pathway">
    <text evidence="1">Amino-acid biosynthesis; L-valine biosynthesis; L-valine from pyruvate: step 3/4.</text>
</comment>
<comment type="subunit">
    <text evidence="1">Homodimer.</text>
</comment>
<comment type="similarity">
    <text evidence="1">Belongs to the IlvD/Edd family.</text>
</comment>
<name>ILVD_BACTN</name>